<organism>
    <name type="scientific">Methylacidiphilum infernorum (isolate V4)</name>
    <name type="common">Methylokorus infernorum (strain V4)</name>
    <dbReference type="NCBI Taxonomy" id="481448"/>
    <lineage>
        <taxon>Bacteria</taxon>
        <taxon>Pseudomonadati</taxon>
        <taxon>Verrucomicrobiota</taxon>
        <taxon>Methylacidiphilae</taxon>
        <taxon>Methylacidiphilales</taxon>
        <taxon>Methylacidiphilaceae</taxon>
        <taxon>Methylacidiphilum (ex Ratnadevi et al. 2023)</taxon>
    </lineage>
</organism>
<evidence type="ECO:0000255" key="1">
    <source>
        <dbReference type="HAMAP-Rule" id="MF_00272"/>
    </source>
</evidence>
<evidence type="ECO:0000255" key="2">
    <source>
        <dbReference type="PROSITE-ProRule" id="PRU01066"/>
    </source>
</evidence>
<name>GCSH_METI4</name>
<proteinExistence type="inferred from homology"/>
<protein>
    <recommendedName>
        <fullName evidence="1">Glycine cleavage system H protein</fullName>
    </recommendedName>
</protein>
<accession>B3DZN7</accession>
<comment type="function">
    <text evidence="1">The glycine cleavage system catalyzes the degradation of glycine. The H protein shuttles the methylamine group of glycine from the P protein to the T protein.</text>
</comment>
<comment type="cofactor">
    <cofactor evidence="1">
        <name>(R)-lipoate</name>
        <dbReference type="ChEBI" id="CHEBI:83088"/>
    </cofactor>
    <text evidence="1">Binds 1 lipoyl cofactor covalently.</text>
</comment>
<comment type="subunit">
    <text evidence="1">The glycine cleavage system is composed of four proteins: P, T, L and H.</text>
</comment>
<comment type="similarity">
    <text evidence="1">Belongs to the GcvH family.</text>
</comment>
<dbReference type="EMBL" id="CP000975">
    <property type="protein sequence ID" value="ACD84222.1"/>
    <property type="molecule type" value="Genomic_DNA"/>
</dbReference>
<dbReference type="RefSeq" id="WP_012464504.1">
    <property type="nucleotide sequence ID" value="NC_010794.1"/>
</dbReference>
<dbReference type="SMR" id="B3DZN7"/>
<dbReference type="STRING" id="481448.Minf_2168"/>
<dbReference type="KEGG" id="min:Minf_2168"/>
<dbReference type="eggNOG" id="COG0509">
    <property type="taxonomic scope" value="Bacteria"/>
</dbReference>
<dbReference type="HOGENOM" id="CLU_097408_2_0_0"/>
<dbReference type="OrthoDB" id="9796712at2"/>
<dbReference type="Proteomes" id="UP000009149">
    <property type="component" value="Chromosome"/>
</dbReference>
<dbReference type="GO" id="GO:0005737">
    <property type="term" value="C:cytoplasm"/>
    <property type="evidence" value="ECO:0007669"/>
    <property type="project" value="TreeGrafter"/>
</dbReference>
<dbReference type="GO" id="GO:0005960">
    <property type="term" value="C:glycine cleavage complex"/>
    <property type="evidence" value="ECO:0007669"/>
    <property type="project" value="InterPro"/>
</dbReference>
<dbReference type="GO" id="GO:0019464">
    <property type="term" value="P:glycine decarboxylation via glycine cleavage system"/>
    <property type="evidence" value="ECO:0007669"/>
    <property type="project" value="UniProtKB-UniRule"/>
</dbReference>
<dbReference type="CDD" id="cd06848">
    <property type="entry name" value="GCS_H"/>
    <property type="match status" value="1"/>
</dbReference>
<dbReference type="Gene3D" id="2.40.50.100">
    <property type="match status" value="1"/>
</dbReference>
<dbReference type="HAMAP" id="MF_00272">
    <property type="entry name" value="GcvH"/>
    <property type="match status" value="1"/>
</dbReference>
<dbReference type="InterPro" id="IPR003016">
    <property type="entry name" value="2-oxoA_DH_lipoyl-BS"/>
</dbReference>
<dbReference type="InterPro" id="IPR000089">
    <property type="entry name" value="Biotin_lipoyl"/>
</dbReference>
<dbReference type="InterPro" id="IPR002930">
    <property type="entry name" value="GCV_H"/>
</dbReference>
<dbReference type="InterPro" id="IPR033753">
    <property type="entry name" value="GCV_H/Fam206"/>
</dbReference>
<dbReference type="InterPro" id="IPR017453">
    <property type="entry name" value="GCV_H_sub"/>
</dbReference>
<dbReference type="InterPro" id="IPR011053">
    <property type="entry name" value="Single_hybrid_motif"/>
</dbReference>
<dbReference type="NCBIfam" id="TIGR00527">
    <property type="entry name" value="gcvH"/>
    <property type="match status" value="1"/>
</dbReference>
<dbReference type="NCBIfam" id="NF002270">
    <property type="entry name" value="PRK01202.1"/>
    <property type="match status" value="1"/>
</dbReference>
<dbReference type="PANTHER" id="PTHR11715">
    <property type="entry name" value="GLYCINE CLEAVAGE SYSTEM H PROTEIN"/>
    <property type="match status" value="1"/>
</dbReference>
<dbReference type="PANTHER" id="PTHR11715:SF3">
    <property type="entry name" value="GLYCINE CLEAVAGE SYSTEM H PROTEIN-RELATED"/>
    <property type="match status" value="1"/>
</dbReference>
<dbReference type="Pfam" id="PF01597">
    <property type="entry name" value="GCV_H"/>
    <property type="match status" value="1"/>
</dbReference>
<dbReference type="SUPFAM" id="SSF51230">
    <property type="entry name" value="Single hybrid motif"/>
    <property type="match status" value="1"/>
</dbReference>
<dbReference type="PROSITE" id="PS50968">
    <property type="entry name" value="BIOTINYL_LIPOYL"/>
    <property type="match status" value="1"/>
</dbReference>
<dbReference type="PROSITE" id="PS00189">
    <property type="entry name" value="LIPOYL"/>
    <property type="match status" value="1"/>
</dbReference>
<gene>
    <name evidence="1" type="primary">gcvH</name>
    <name type="ordered locus">Minf_2168</name>
</gene>
<feature type="chain" id="PRO_1000204749" description="Glycine cleavage system H protein">
    <location>
        <begin position="1"/>
        <end position="128"/>
    </location>
</feature>
<feature type="domain" description="Lipoyl-binding" evidence="2">
    <location>
        <begin position="22"/>
        <end position="104"/>
    </location>
</feature>
<feature type="modified residue" description="N6-lipoyllysine" evidence="1">
    <location>
        <position position="63"/>
    </location>
</feature>
<keyword id="KW-0450">Lipoyl</keyword>
<sequence length="128" mass="14225">MNIPSDRLYTDTHEWVNVSGDVATVGITEHAQRELSDIVYIELPKVGERFNQKAVVGVVESVKAASDLYAPVSGEILAVNTQLVEQPSLINSNPYGEGWIFKMKMTNPDELSSLKDAEAYQELLQDKE</sequence>
<reference key="1">
    <citation type="journal article" date="2008" name="Biol. Direct">
        <title>Complete genome sequence of the extremely acidophilic methanotroph isolate V4, Methylacidiphilum infernorum, a representative of the bacterial phylum Verrucomicrobia.</title>
        <authorList>
            <person name="Hou S."/>
            <person name="Makarova K.S."/>
            <person name="Saw J.H."/>
            <person name="Senin P."/>
            <person name="Ly B.V."/>
            <person name="Zhou Z."/>
            <person name="Ren Y."/>
            <person name="Wang J."/>
            <person name="Galperin M.Y."/>
            <person name="Omelchenko M.V."/>
            <person name="Wolf Y.I."/>
            <person name="Yutin N."/>
            <person name="Koonin E.V."/>
            <person name="Stott M.B."/>
            <person name="Mountain B.W."/>
            <person name="Crowe M.A."/>
            <person name="Smirnova A.V."/>
            <person name="Dunfield P.F."/>
            <person name="Feng L."/>
            <person name="Wang L."/>
            <person name="Alam M."/>
        </authorList>
    </citation>
    <scope>NUCLEOTIDE SEQUENCE [LARGE SCALE GENOMIC DNA]</scope>
    <source>
        <strain>Isolate V4</strain>
    </source>
</reference>